<evidence type="ECO:0000255" key="1">
    <source>
        <dbReference type="HAMAP-Rule" id="MF_01551"/>
    </source>
</evidence>
<reference key="1">
    <citation type="journal article" date="2000" name="Nature">
        <title>Complete genome sequence of Pseudomonas aeruginosa PAO1, an opportunistic pathogen.</title>
        <authorList>
            <person name="Stover C.K."/>
            <person name="Pham X.-Q.T."/>
            <person name="Erwin A.L."/>
            <person name="Mizoguchi S.D."/>
            <person name="Warrener P."/>
            <person name="Hickey M.J."/>
            <person name="Brinkman F.S.L."/>
            <person name="Hufnagle W.O."/>
            <person name="Kowalik D.J."/>
            <person name="Lagrou M."/>
            <person name="Garber R.L."/>
            <person name="Goltry L."/>
            <person name="Tolentino E."/>
            <person name="Westbrock-Wadman S."/>
            <person name="Yuan Y."/>
            <person name="Brody L.L."/>
            <person name="Coulter S.N."/>
            <person name="Folger K.R."/>
            <person name="Kas A."/>
            <person name="Larbig K."/>
            <person name="Lim R.M."/>
            <person name="Smith K.A."/>
            <person name="Spencer D.H."/>
            <person name="Wong G.K.-S."/>
            <person name="Wu Z."/>
            <person name="Paulsen I.T."/>
            <person name="Reizer J."/>
            <person name="Saier M.H. Jr."/>
            <person name="Hancock R.E.W."/>
            <person name="Lory S."/>
            <person name="Olson M.V."/>
        </authorList>
    </citation>
    <scope>NUCLEOTIDE SEQUENCE [LARGE SCALE GENOMIC DNA]</scope>
    <source>
        <strain>ATCC 15692 / DSM 22644 / CIP 104116 / JCM 14847 / LMG 12228 / 1C / PRS 101 / PAO1</strain>
    </source>
</reference>
<proteinExistence type="inferred from homology"/>
<dbReference type="EC" id="2.1.1.186" evidence="1"/>
<dbReference type="EMBL" id="AE004091">
    <property type="protein sequence ID" value="AAG04952.1"/>
    <property type="molecule type" value="Genomic_DNA"/>
</dbReference>
<dbReference type="PIR" id="C83451">
    <property type="entry name" value="C83451"/>
</dbReference>
<dbReference type="RefSeq" id="NP_250254.1">
    <property type="nucleotide sequence ID" value="NC_002516.2"/>
</dbReference>
<dbReference type="RefSeq" id="WP_003087345.1">
    <property type="nucleotide sequence ID" value="NZ_QZGE01000003.1"/>
</dbReference>
<dbReference type="SMR" id="Q9I3F4"/>
<dbReference type="FunCoup" id="Q9I3F4">
    <property type="interactions" value="30"/>
</dbReference>
<dbReference type="STRING" id="208964.PA1563"/>
<dbReference type="PaxDb" id="208964-PA1563"/>
<dbReference type="DNASU" id="879379"/>
<dbReference type="GeneID" id="879379"/>
<dbReference type="KEGG" id="pae:PA1563"/>
<dbReference type="PATRIC" id="fig|208964.12.peg.1619"/>
<dbReference type="PseudoCAP" id="PA1563"/>
<dbReference type="HOGENOM" id="CLU_043780_0_0_6"/>
<dbReference type="InParanoid" id="Q9I3F4"/>
<dbReference type="OrthoDB" id="154490at2"/>
<dbReference type="PhylomeDB" id="Q9I3F4"/>
<dbReference type="BioCyc" id="PAER208964:G1FZ6-1592-MONOMER"/>
<dbReference type="Proteomes" id="UP000002438">
    <property type="component" value="Chromosome"/>
</dbReference>
<dbReference type="GO" id="GO:0005737">
    <property type="term" value="C:cytoplasm"/>
    <property type="evidence" value="ECO:0007669"/>
    <property type="project" value="UniProtKB-SubCell"/>
</dbReference>
<dbReference type="GO" id="GO:0070677">
    <property type="term" value="F:rRNA (cytosine-2'-O-)-methyltransferase activity"/>
    <property type="evidence" value="ECO:0000318"/>
    <property type="project" value="GO_Central"/>
</dbReference>
<dbReference type="GO" id="GO:0006364">
    <property type="term" value="P:rRNA processing"/>
    <property type="evidence" value="ECO:0000318"/>
    <property type="project" value="GO_Central"/>
</dbReference>
<dbReference type="Gene3D" id="3.30.2300.20">
    <property type="match status" value="1"/>
</dbReference>
<dbReference type="Gene3D" id="3.30.70.2810">
    <property type="match status" value="1"/>
</dbReference>
<dbReference type="Gene3D" id="3.40.50.150">
    <property type="entry name" value="Vaccinia Virus protein VP39"/>
    <property type="match status" value="1"/>
</dbReference>
<dbReference type="HAMAP" id="MF_01551">
    <property type="entry name" value="23SrRNA_methyltr_M"/>
    <property type="match status" value="1"/>
</dbReference>
<dbReference type="InterPro" id="IPR040739">
    <property type="entry name" value="RlmM_FDX"/>
</dbReference>
<dbReference type="InterPro" id="IPR048646">
    <property type="entry name" value="RlmM_THUMP-like"/>
</dbReference>
<dbReference type="InterPro" id="IPR002877">
    <property type="entry name" value="RNA_MeTrfase_FtsJ_dom"/>
</dbReference>
<dbReference type="InterPro" id="IPR011224">
    <property type="entry name" value="rRNA_MeTrfase_M"/>
</dbReference>
<dbReference type="InterPro" id="IPR029063">
    <property type="entry name" value="SAM-dependent_MTases_sf"/>
</dbReference>
<dbReference type="NCBIfam" id="NF008734">
    <property type="entry name" value="PRK11760.1"/>
    <property type="match status" value="1"/>
</dbReference>
<dbReference type="PANTHER" id="PTHR37524">
    <property type="entry name" value="RIBOSOMAL RNA LARGE SUBUNIT METHYLTRANSFERASE M"/>
    <property type="match status" value="1"/>
</dbReference>
<dbReference type="PANTHER" id="PTHR37524:SF2">
    <property type="entry name" value="RIBOSOMAL RNA METHYLTRANSFERASE FTSJ DOMAIN-CONTAINING PROTEIN"/>
    <property type="match status" value="1"/>
</dbReference>
<dbReference type="Pfam" id="PF01728">
    <property type="entry name" value="FtsJ"/>
    <property type="match status" value="1"/>
</dbReference>
<dbReference type="Pfam" id="PF18125">
    <property type="entry name" value="RlmM_FDX"/>
    <property type="match status" value="1"/>
</dbReference>
<dbReference type="Pfam" id="PF21239">
    <property type="entry name" value="RLMM_N"/>
    <property type="match status" value="1"/>
</dbReference>
<dbReference type="PIRSF" id="PIRSF028774">
    <property type="entry name" value="UCP028774"/>
    <property type="match status" value="1"/>
</dbReference>
<dbReference type="SUPFAM" id="SSF53335">
    <property type="entry name" value="S-adenosyl-L-methionine-dependent methyltransferases"/>
    <property type="match status" value="1"/>
</dbReference>
<protein>
    <recommendedName>
        <fullName evidence="1">Ribosomal RNA large subunit methyltransferase M</fullName>
        <ecNumber evidence="1">2.1.1.186</ecNumber>
    </recommendedName>
    <alternativeName>
        <fullName evidence="1">23S rRNA (cytidine2498-2'-O)-methyltransferase</fullName>
    </alternativeName>
    <alternativeName>
        <fullName evidence="1">23S rRNA 2'-O-ribose methyltransferase RlmM</fullName>
    </alternativeName>
</protein>
<accession>Q9I3F4</accession>
<comment type="function">
    <text evidence="1">Catalyzes the 2'-O-methylation at nucleotide C2498 in 23S rRNA.</text>
</comment>
<comment type="catalytic activity">
    <reaction evidence="1">
        <text>cytidine(2498) in 23S rRNA + S-adenosyl-L-methionine = 2'-O-methylcytidine(2498) in 23S rRNA + S-adenosyl-L-homocysteine + H(+)</text>
        <dbReference type="Rhea" id="RHEA:42788"/>
        <dbReference type="Rhea" id="RHEA-COMP:10244"/>
        <dbReference type="Rhea" id="RHEA-COMP:10245"/>
        <dbReference type="ChEBI" id="CHEBI:15378"/>
        <dbReference type="ChEBI" id="CHEBI:57856"/>
        <dbReference type="ChEBI" id="CHEBI:59789"/>
        <dbReference type="ChEBI" id="CHEBI:74495"/>
        <dbReference type="ChEBI" id="CHEBI:82748"/>
        <dbReference type="EC" id="2.1.1.186"/>
    </reaction>
</comment>
<comment type="subunit">
    <text evidence="1">Monomer.</text>
</comment>
<comment type="subcellular location">
    <subcellularLocation>
        <location evidence="1">Cytoplasm</location>
    </subcellularLocation>
</comment>
<comment type="similarity">
    <text evidence="1">Belongs to the class I-like SAM-binding methyltransferase superfamily. RNA methyltransferase RlmE family. RlmM subfamily.</text>
</comment>
<sequence>MNTLLMHCRPGFEGEVCAEIAEHAATLEIPGYAKSKPASAHVEFVCQDADGAERLMRRLRFADLIFPRQWARGPGFIELPESQRIEVLLAELASYPVCGSLWLEVLDTNAGKEVSTFCRKFEKPLRAALVKAGRLQEDPALPRLLLTFRSGREVFVGLAEPRNSALWPMGIPRLKFPREAPSRSTLKLEEAWHQFIPRSEWDKRLAPDMLAVDLGAAPGGWTWQLVNREMRVTAVDNGPMAENLMYSGLVDHQKVDGYQYRPRQRVDWMVCDIVEKPARTGALIETWIGEGLCREAVVNLKLPMKQRYAEVRKILQRLRESFDARGLKVAIGCKQLYHDREEVTCHLRRLER</sequence>
<gene>
    <name evidence="1" type="primary">rlmM</name>
    <name type="ordered locus">PA1563</name>
</gene>
<name>RLMM_PSEAE</name>
<feature type="chain" id="PRO_0000070416" description="Ribosomal RNA large subunit methyltransferase M">
    <location>
        <begin position="1"/>
        <end position="352"/>
    </location>
</feature>
<feature type="active site" description="Proton acceptor" evidence="1">
    <location>
        <position position="301"/>
    </location>
</feature>
<feature type="binding site" evidence="1">
    <location>
        <position position="184"/>
    </location>
    <ligand>
        <name>S-adenosyl-L-methionine</name>
        <dbReference type="ChEBI" id="CHEBI:59789"/>
    </ligand>
</feature>
<feature type="binding site" evidence="1">
    <location>
        <begin position="217"/>
        <end position="220"/>
    </location>
    <ligand>
        <name>S-adenosyl-L-methionine</name>
        <dbReference type="ChEBI" id="CHEBI:59789"/>
    </ligand>
</feature>
<feature type="binding site" evidence="1">
    <location>
        <position position="236"/>
    </location>
    <ligand>
        <name>S-adenosyl-L-methionine</name>
        <dbReference type="ChEBI" id="CHEBI:59789"/>
    </ligand>
</feature>
<feature type="binding site" evidence="1">
    <location>
        <position position="256"/>
    </location>
    <ligand>
        <name>S-adenosyl-L-methionine</name>
        <dbReference type="ChEBI" id="CHEBI:59789"/>
    </ligand>
</feature>
<feature type="binding site" evidence="1">
    <location>
        <position position="272"/>
    </location>
    <ligand>
        <name>S-adenosyl-L-methionine</name>
        <dbReference type="ChEBI" id="CHEBI:59789"/>
    </ligand>
</feature>
<organism>
    <name type="scientific">Pseudomonas aeruginosa (strain ATCC 15692 / DSM 22644 / CIP 104116 / JCM 14847 / LMG 12228 / 1C / PRS 101 / PAO1)</name>
    <dbReference type="NCBI Taxonomy" id="208964"/>
    <lineage>
        <taxon>Bacteria</taxon>
        <taxon>Pseudomonadati</taxon>
        <taxon>Pseudomonadota</taxon>
        <taxon>Gammaproteobacteria</taxon>
        <taxon>Pseudomonadales</taxon>
        <taxon>Pseudomonadaceae</taxon>
        <taxon>Pseudomonas</taxon>
    </lineage>
</organism>
<keyword id="KW-0963">Cytoplasm</keyword>
<keyword id="KW-0489">Methyltransferase</keyword>
<keyword id="KW-1185">Reference proteome</keyword>
<keyword id="KW-0698">rRNA processing</keyword>
<keyword id="KW-0949">S-adenosyl-L-methionine</keyword>
<keyword id="KW-0808">Transferase</keyword>